<comment type="function">
    <text evidence="1 2 9">Cytokine that may play an important role during carcinogenesis and metanephric kidney organogenesis, as a BMP antagonist required for early limb outgrowth and patterning in maintaining the FGF4-SHH feedback loop. Down-regulates the BMP4 signaling in a dose-dependent manner (By similarity). Antagonist of BMP2; inhibits BMP2-mediated differentiation of osteoblasts (in vitro) (PubMed:27036124). Acts as inhibitor of monocyte chemotaxis. Can inhibit the growth or viability of normal cells but not transformed cells when is overexpressed (By similarity).</text>
</comment>
<comment type="subunit">
    <text evidence="1 9">Homodimer; can also form homooligomers (PubMed:27036124). Interacts with BMP2; can form higher oligomers with BMP2 (PubMed:27036124). Interacts with SLIT1 and SLIT2 in a glycosylation-dependent manner (By similarity).</text>
</comment>
<comment type="interaction">
    <interactant intactId="EBI-944395">
        <id>O60565</id>
    </interactant>
    <interactant intactId="EBI-1005487">
        <id>P35968</id>
        <label>KDR</label>
    </interactant>
    <organismsDiffer>false</organismsDiffer>
    <experiments>4</experiments>
</comment>
<comment type="interaction">
    <interactant intactId="EBI-944395">
        <id>O60565</id>
    </interactant>
    <interactant intactId="EBI-10176379">
        <id>P59991</id>
        <label>KRTAP12-2</label>
    </interactant>
    <organismsDiffer>false</organismsDiffer>
    <experiments>3</experiments>
</comment>
<comment type="interaction">
    <interactant intactId="EBI-944395">
        <id>O60565</id>
    </interactant>
    <interactant intactId="EBI-724076">
        <id>Q99750</id>
        <label>MDFI</label>
    </interactant>
    <organismsDiffer>false</organismsDiffer>
    <experiments>3</experiments>
</comment>
<comment type="interaction">
    <interactant intactId="EBI-944395">
        <id>O60565</id>
    </interactant>
    <interactant intactId="EBI-306940">
        <id>Q04917</id>
        <label>YWHAH</label>
    </interactant>
    <organismsDiffer>false</organismsDiffer>
    <experiments>5</experiments>
</comment>
<comment type="subcellular location">
    <subcellularLocation>
        <location evidence="12">Secreted</location>
    </subcellularLocation>
</comment>
<comment type="alternative products">
    <event type="alternative splicing"/>
    <isoform>
        <id>O60565-1</id>
        <name>1</name>
        <sequence type="displayed"/>
    </isoform>
    <isoform>
        <id>O60565-2</id>
        <name>2</name>
        <sequence type="described" ref="VSP_013321"/>
    </isoform>
</comment>
<comment type="tissue specificity">
    <text evidence="6 8">Highly expressed in small intestine, fetal brain and colon. Expression is restricted to intestinal subepithelial myofibroblasts (ISEMFs) at the crypt base. In subjects with HMPS1, by contrast, GREM1 is expressed, not only in basal ISEMFs, but also at very high levels in epithelial cells (predominantly colonocytes), with expression extending most of the way up the sides of the crypt. Weakly expressed in brain, ovary, prostate, pancreas and skeletal muscle. In brain found in the region localized around the internal capsule in the large subcortical nuclei, including caudate, putamen, substantia nigra, thalamus and subthalamus. Predominantly expressed in normal cells including neurons, astrocytes and fibroblasts.</text>
</comment>
<comment type="induction">
    <text evidence="5 6">By high glucose through TGFB1-mediated pathways in mesangial cell. Down-regulated in tumor cell lines.</text>
</comment>
<comment type="disease" evidence="8">
    <disease id="DI-03478">
        <name>Polyposis syndrome, mixed hereditary 1</name>
        <acronym>HMPS1</acronym>
        <description>A disease characterized by apparent autosomal dominant inheritance of multiple types of colorectal polyp, with colorectal carcinoma occurring in a high proportion of affected individuals. Patients can develop polyps of multiple and mixed morphologies, including serrated lesions, Peutz-Jeghers polyps, juvenile polyps, conventional adenomas and colorectal carcinoma in the absence of any identifiable extra-colonic features.</description>
        <dbReference type="MIM" id="601228"/>
    </disease>
    <text evidence="8">The disease is caused by variants affecting the gene represented in this entry. HMPS1 is caused by a duplication spanning the 3' end of the SCG5 gene and a region upstream of the GREM1 locus. This duplication is associated with increased allele-specific GREM1 expression that may cause reduced bone morphogenetic protein (BMP) pathway activity. This mechanism also underlies tumorigenesis in juvenile polyposis of the large bowel (PubMed:22561515).</text>
</comment>
<comment type="similarity">
    <text evidence="12">Belongs to the DAN family.</text>
</comment>
<accession>O60565</accession>
<accession>Q52LV3</accession>
<accession>Q8N914</accession>
<accession>Q8N936</accession>
<reference key="1">
    <citation type="journal article" date="1998" name="Mol. Cell">
        <title>The Xenopus dorsalizing factor Gremlin identifies a novel family of secreted proteins that antagonize BMP activities.</title>
        <authorList>
            <person name="Hsu D.R."/>
            <person name="Economides A.N."/>
            <person name="Wang X."/>
            <person name="Eimon P.M."/>
            <person name="Harland R.M."/>
        </authorList>
    </citation>
    <scope>NUCLEOTIDE SEQUENCE [MRNA] (ISOFORM 1)</scope>
</reference>
<reference key="2">
    <citation type="journal article" date="2000" name="J. Biol. Chem.">
        <title>IHG-2, a mesangial cell gene induced by high glucose, is human gremlin. Regulation by extracellular glucose concentration, cyclic mechanical strain, and transforming growth factor-beta1.</title>
        <authorList>
            <person name="McMahon R."/>
            <person name="Murphy M."/>
            <person name="Clarkson M."/>
            <person name="Taal M."/>
            <person name="Mackenzie H.S."/>
            <person name="Godson C."/>
            <person name="Martin F."/>
            <person name="Brady H.R."/>
        </authorList>
    </citation>
    <scope>NUCLEOTIDE SEQUENCE [MRNA] (ISOFORM 1)</scope>
    <scope>INDUCTION</scope>
</reference>
<reference key="3">
    <citation type="journal article" date="2000" name="Cytogenet. Cell Genet.">
        <title>DRM/GREMLIN (CKTSF1B1) maps to human chromosome 15 and is highly expressed in adult and fetal brain.</title>
        <authorList>
            <person name="Topol L.Z."/>
            <person name="Modi W.S."/>
            <person name="Koochekpour S."/>
            <person name="Blair D.G."/>
        </authorList>
    </citation>
    <scope>NUCLEOTIDE SEQUENCE [MRNA] (ISOFORM 1)</scope>
    <scope>TISSUE SPECIFICITY</scope>
    <scope>INDUCTION</scope>
    <source>
        <tissue>Small intestine</tissue>
    </source>
</reference>
<reference key="4">
    <citation type="submission" date="1999-09" db="EMBL/GenBank/DDBJ databases">
        <title>Human Gremlin homologue.</title>
        <authorList>
            <person name="Tate G."/>
            <person name="Mitsuya T."/>
        </authorList>
    </citation>
    <scope>NUCLEOTIDE SEQUENCE [GENOMIC DNA]</scope>
</reference>
<reference key="5">
    <citation type="submission" date="2003-02" db="EMBL/GenBank/DDBJ databases">
        <title>Identification of a human cell proliferation gene.</title>
        <authorList>
            <person name="Kim J.W."/>
        </authorList>
    </citation>
    <scope>NUCLEOTIDE SEQUENCE [LARGE SCALE MRNA] (ISOFORM 1)</scope>
</reference>
<reference key="6">
    <citation type="journal article" date="2004" name="Nat. Genet.">
        <title>Complete sequencing and characterization of 21,243 full-length human cDNAs.</title>
        <authorList>
            <person name="Ota T."/>
            <person name="Suzuki Y."/>
            <person name="Nishikawa T."/>
            <person name="Otsuki T."/>
            <person name="Sugiyama T."/>
            <person name="Irie R."/>
            <person name="Wakamatsu A."/>
            <person name="Hayashi K."/>
            <person name="Sato H."/>
            <person name="Nagai K."/>
            <person name="Kimura K."/>
            <person name="Makita H."/>
            <person name="Sekine M."/>
            <person name="Obayashi M."/>
            <person name="Nishi T."/>
            <person name="Shibahara T."/>
            <person name="Tanaka T."/>
            <person name="Ishii S."/>
            <person name="Yamamoto J."/>
            <person name="Saito K."/>
            <person name="Kawai Y."/>
            <person name="Isono Y."/>
            <person name="Nakamura Y."/>
            <person name="Nagahari K."/>
            <person name="Murakami K."/>
            <person name="Yasuda T."/>
            <person name="Iwayanagi T."/>
            <person name="Wagatsuma M."/>
            <person name="Shiratori A."/>
            <person name="Sudo H."/>
            <person name="Hosoiri T."/>
            <person name="Kaku Y."/>
            <person name="Kodaira H."/>
            <person name="Kondo H."/>
            <person name="Sugawara M."/>
            <person name="Takahashi M."/>
            <person name="Kanda K."/>
            <person name="Yokoi T."/>
            <person name="Furuya T."/>
            <person name="Kikkawa E."/>
            <person name="Omura Y."/>
            <person name="Abe K."/>
            <person name="Kamihara K."/>
            <person name="Katsuta N."/>
            <person name="Sato K."/>
            <person name="Tanikawa M."/>
            <person name="Yamazaki M."/>
            <person name="Ninomiya K."/>
            <person name="Ishibashi T."/>
            <person name="Yamashita H."/>
            <person name="Murakawa K."/>
            <person name="Fujimori K."/>
            <person name="Tanai H."/>
            <person name="Kimata M."/>
            <person name="Watanabe M."/>
            <person name="Hiraoka S."/>
            <person name="Chiba Y."/>
            <person name="Ishida S."/>
            <person name="Ono Y."/>
            <person name="Takiguchi S."/>
            <person name="Watanabe S."/>
            <person name="Yosida M."/>
            <person name="Hotuta T."/>
            <person name="Kusano J."/>
            <person name="Kanehori K."/>
            <person name="Takahashi-Fujii A."/>
            <person name="Hara H."/>
            <person name="Tanase T.-O."/>
            <person name="Nomura Y."/>
            <person name="Togiya S."/>
            <person name="Komai F."/>
            <person name="Hara R."/>
            <person name="Takeuchi K."/>
            <person name="Arita M."/>
            <person name="Imose N."/>
            <person name="Musashino K."/>
            <person name="Yuuki H."/>
            <person name="Oshima A."/>
            <person name="Sasaki N."/>
            <person name="Aotsuka S."/>
            <person name="Yoshikawa Y."/>
            <person name="Matsunawa H."/>
            <person name="Ichihara T."/>
            <person name="Shiohata N."/>
            <person name="Sano S."/>
            <person name="Moriya S."/>
            <person name="Momiyama H."/>
            <person name="Satoh N."/>
            <person name="Takami S."/>
            <person name="Terashima Y."/>
            <person name="Suzuki O."/>
            <person name="Nakagawa S."/>
            <person name="Senoh A."/>
            <person name="Mizoguchi H."/>
            <person name="Goto Y."/>
            <person name="Shimizu F."/>
            <person name="Wakebe H."/>
            <person name="Hishigaki H."/>
            <person name="Watanabe T."/>
            <person name="Sugiyama A."/>
            <person name="Takemoto M."/>
            <person name="Kawakami B."/>
            <person name="Yamazaki M."/>
            <person name="Watanabe K."/>
            <person name="Kumagai A."/>
            <person name="Itakura S."/>
            <person name="Fukuzumi Y."/>
            <person name="Fujimori Y."/>
            <person name="Komiyama M."/>
            <person name="Tashiro H."/>
            <person name="Tanigami A."/>
            <person name="Fujiwara T."/>
            <person name="Ono T."/>
            <person name="Yamada K."/>
            <person name="Fujii Y."/>
            <person name="Ozaki K."/>
            <person name="Hirao M."/>
            <person name="Ohmori Y."/>
            <person name="Kawabata A."/>
            <person name="Hikiji T."/>
            <person name="Kobatake N."/>
            <person name="Inagaki H."/>
            <person name="Ikema Y."/>
            <person name="Okamoto S."/>
            <person name="Okitani R."/>
            <person name="Kawakami T."/>
            <person name="Noguchi S."/>
            <person name="Itoh T."/>
            <person name="Shigeta K."/>
            <person name="Senba T."/>
            <person name="Matsumura K."/>
            <person name="Nakajima Y."/>
            <person name="Mizuno T."/>
            <person name="Morinaga M."/>
            <person name="Sasaki M."/>
            <person name="Togashi T."/>
            <person name="Oyama M."/>
            <person name="Hata H."/>
            <person name="Watanabe M."/>
            <person name="Komatsu T."/>
            <person name="Mizushima-Sugano J."/>
            <person name="Satoh T."/>
            <person name="Shirai Y."/>
            <person name="Takahashi Y."/>
            <person name="Nakagawa K."/>
            <person name="Okumura K."/>
            <person name="Nagase T."/>
            <person name="Nomura N."/>
            <person name="Kikuchi H."/>
            <person name="Masuho Y."/>
            <person name="Yamashita R."/>
            <person name="Nakai K."/>
            <person name="Yada T."/>
            <person name="Nakamura Y."/>
            <person name="Ohara O."/>
            <person name="Isogai T."/>
            <person name="Sugano S."/>
        </authorList>
    </citation>
    <scope>NUCLEOTIDE SEQUENCE [LARGE SCALE MRNA] (ISOFORM 2)</scope>
    <source>
        <tissue>Chondrocyte</tissue>
    </source>
</reference>
<reference key="7">
    <citation type="journal article" date="2004" name="Genome Res.">
        <title>The status, quality, and expansion of the NIH full-length cDNA project: the Mammalian Gene Collection (MGC).</title>
        <authorList>
            <consortium name="The MGC Project Team"/>
        </authorList>
    </citation>
    <scope>NUCLEOTIDE SEQUENCE [LARGE SCALE MRNA] (ISOFORM 1)</scope>
    <source>
        <tissue>Liver</tissue>
    </source>
</reference>
<reference key="8">
    <citation type="journal article" date="2004" name="Protein Sci.">
        <title>Signal peptide prediction based on analysis of experimentally verified cleavage sites.</title>
        <authorList>
            <person name="Zhang Z."/>
            <person name="Henzel W.J."/>
        </authorList>
    </citation>
    <scope>PROTEIN SEQUENCE OF 25-39</scope>
</reference>
<reference key="9">
    <citation type="journal article" date="2012" name="Nat. Genet.">
        <title>Hereditary mixed polyposis syndrome is caused by a 40-kb upstream duplication that leads to increased and ectopic expression of the BMP antagonist GREM1.</title>
        <authorList>
            <person name="Jaeger E."/>
            <person name="Leedham S."/>
            <person name="Lewis A."/>
            <person name="Segditsas S."/>
            <person name="Becker M."/>
            <person name="Cuadrado P.R."/>
            <person name="Davis H."/>
            <person name="Kaur K."/>
            <person name="Heinimann K."/>
            <person name="Howarth K."/>
            <person name="East J."/>
            <person name="Taylor J."/>
            <person name="Thomas H."/>
            <person name="Tomlinson I."/>
        </authorList>
    </citation>
    <scope>TISSUE SPECIFICITY</scope>
    <scope>INVOLVEMENT IN HMPS1</scope>
</reference>
<reference evidence="13" key="10">
    <citation type="journal article" date="2016" name="Biochem. J.">
        <title>Structure of Gremlin-1 and analysis of its interaction with BMP-2.</title>
        <authorList>
            <person name="Kisonaite M."/>
            <person name="Wang X."/>
            <person name="Hyvonen M."/>
        </authorList>
    </citation>
    <scope>X-RAY CRYSTALLOGRAPHY (1.90 ANGSTROMS) OF 72-184</scope>
    <scope>FUNCTION</scope>
    <scope>SUBUNIT</scope>
    <scope>INTERACTION WITH BMP2</scope>
    <scope>DISULFIDE BONDS</scope>
</reference>
<keyword id="KW-0002">3D-structure</keyword>
<keyword id="KW-0025">Alternative splicing</keyword>
<keyword id="KW-0202">Cytokine</keyword>
<keyword id="KW-0903">Direct protein sequencing</keyword>
<keyword id="KW-1015">Disulfide bond</keyword>
<keyword id="KW-0325">Glycoprotein</keyword>
<keyword id="KW-1267">Proteomics identification</keyword>
<keyword id="KW-1185">Reference proteome</keyword>
<keyword id="KW-0964">Secreted</keyword>
<keyword id="KW-0732">Signal</keyword>
<feature type="signal peptide" evidence="7">
    <location>
        <begin position="1"/>
        <end position="24"/>
    </location>
</feature>
<feature type="chain" id="PRO_0000006714" description="Gremlin-1">
    <location>
        <begin position="25"/>
        <end position="184"/>
    </location>
</feature>
<feature type="domain" description="CTCK">
    <location>
        <begin position="94"/>
        <end position="184"/>
    </location>
</feature>
<feature type="region of interest" description="Disordered" evidence="4">
    <location>
        <begin position="24"/>
        <end position="77"/>
    </location>
</feature>
<feature type="glycosylation site" description="N-linked (GlcNAc...) asparagine" evidence="3">
    <location>
        <position position="42"/>
    </location>
</feature>
<feature type="disulfide bond" evidence="9 13">
    <location>
        <begin position="94"/>
        <end position="144"/>
    </location>
</feature>
<feature type="disulfide bond" evidence="9 13">
    <location>
        <begin position="108"/>
        <end position="158"/>
    </location>
</feature>
<feature type="disulfide bond" evidence="9 13">
    <location>
        <begin position="118"/>
        <end position="176"/>
    </location>
</feature>
<feature type="disulfide bond" evidence="9 13">
    <location>
        <begin position="122"/>
        <end position="178"/>
    </location>
</feature>
<feature type="splice variant" id="VSP_013321" description="In isoform 2." evidence="11">
    <location>
        <begin position="39"/>
        <end position="79"/>
    </location>
</feature>
<feature type="strand" evidence="14">
    <location>
        <begin position="74"/>
        <end position="76"/>
    </location>
</feature>
<feature type="helix" evidence="14">
    <location>
        <begin position="77"/>
        <end position="86"/>
    </location>
</feature>
<feature type="turn" evidence="14">
    <location>
        <begin position="87"/>
        <end position="89"/>
    </location>
</feature>
<feature type="strand" evidence="14">
    <location>
        <begin position="93"/>
        <end position="103"/>
    </location>
</feature>
<feature type="strand" evidence="14">
    <location>
        <begin position="111"/>
        <end position="131"/>
    </location>
</feature>
<feature type="strand" evidence="14">
    <location>
        <begin position="134"/>
        <end position="157"/>
    </location>
</feature>
<feature type="strand" evidence="14">
    <location>
        <begin position="161"/>
        <end position="180"/>
    </location>
</feature>
<feature type="strand" evidence="14">
    <location>
        <begin position="182"/>
        <end position="184"/>
    </location>
</feature>
<name>GREM1_HUMAN</name>
<evidence type="ECO:0000250" key="1">
    <source>
        <dbReference type="UniProtKB" id="O35793"/>
    </source>
</evidence>
<evidence type="ECO:0000250" key="2">
    <source>
        <dbReference type="UniProtKB" id="O70326"/>
    </source>
</evidence>
<evidence type="ECO:0000255" key="3"/>
<evidence type="ECO:0000256" key="4">
    <source>
        <dbReference type="SAM" id="MobiDB-lite"/>
    </source>
</evidence>
<evidence type="ECO:0000269" key="5">
    <source>
    </source>
</evidence>
<evidence type="ECO:0000269" key="6">
    <source>
    </source>
</evidence>
<evidence type="ECO:0000269" key="7">
    <source>
    </source>
</evidence>
<evidence type="ECO:0000269" key="8">
    <source>
    </source>
</evidence>
<evidence type="ECO:0000269" key="9">
    <source>
    </source>
</evidence>
<evidence type="ECO:0000303" key="10">
    <source>
    </source>
</evidence>
<evidence type="ECO:0000303" key="11">
    <source>
    </source>
</evidence>
<evidence type="ECO:0000305" key="12"/>
<evidence type="ECO:0007744" key="13">
    <source>
        <dbReference type="PDB" id="5AEJ"/>
    </source>
</evidence>
<evidence type="ECO:0007829" key="14">
    <source>
        <dbReference type="PDB" id="5AEJ"/>
    </source>
</evidence>
<gene>
    <name type="primary">GREM1</name>
    <name type="synonym">CKTSF1B1</name>
    <name type="synonym">DAND2</name>
    <name type="synonym">DRM</name>
    <name type="ORF">PIG2</name>
</gene>
<protein>
    <recommendedName>
        <fullName>Gremlin-1</fullName>
    </recommendedName>
    <alternativeName>
        <fullName>Cell proliferation-inducing gene 2 protein</fullName>
    </alternativeName>
    <alternativeName>
        <fullName>Cysteine knot superfamily 1, BMP antagonist 1</fullName>
    </alternativeName>
    <alternativeName>
        <fullName>DAN domain family member 2</fullName>
    </alternativeName>
    <alternativeName>
        <fullName>Down-regulated in Mos-transformed cells protein</fullName>
    </alternativeName>
    <alternativeName>
        <fullName evidence="10">Increased in high glucose protein 2</fullName>
        <shortName evidence="10">IHG-2</shortName>
    </alternativeName>
</protein>
<dbReference type="EMBL" id="AF045800">
    <property type="protein sequence ID" value="AAC39725.1"/>
    <property type="molecule type" value="mRNA"/>
</dbReference>
<dbReference type="EMBL" id="AF110137">
    <property type="protein sequence ID" value="AAF06677.1"/>
    <property type="molecule type" value="mRNA"/>
</dbReference>
<dbReference type="EMBL" id="AF154054">
    <property type="protein sequence ID" value="AAG23891.1"/>
    <property type="molecule type" value="mRNA"/>
</dbReference>
<dbReference type="EMBL" id="AB032372">
    <property type="protein sequence ID" value="BAA84462.1"/>
    <property type="molecule type" value="Genomic_DNA"/>
</dbReference>
<dbReference type="EMBL" id="AY232290">
    <property type="protein sequence ID" value="AAP69985.1"/>
    <property type="molecule type" value="mRNA"/>
</dbReference>
<dbReference type="EMBL" id="AK095890">
    <property type="protein sequence ID" value="BAC04643.1"/>
    <property type="molecule type" value="mRNA"/>
</dbReference>
<dbReference type="EMBL" id="BC069525">
    <property type="protein sequence ID" value="AAH69525.1"/>
    <property type="molecule type" value="mRNA"/>
</dbReference>
<dbReference type="EMBL" id="BC093778">
    <property type="protein sequence ID" value="AAH93778.1"/>
    <property type="molecule type" value="mRNA"/>
</dbReference>
<dbReference type="EMBL" id="BC101611">
    <property type="protein sequence ID" value="AAI01612.1"/>
    <property type="molecule type" value="mRNA"/>
</dbReference>
<dbReference type="CCDS" id="CCDS10029.1">
    <molecule id="O60565-1"/>
</dbReference>
<dbReference type="CCDS" id="CCDS53927.1">
    <molecule id="O60565-2"/>
</dbReference>
<dbReference type="RefSeq" id="NP_001178252.1">
    <molecule id="O60565-2"/>
    <property type="nucleotide sequence ID" value="NM_001191323.2"/>
</dbReference>
<dbReference type="RefSeq" id="NP_001355648.1">
    <molecule id="O60565-1"/>
    <property type="nucleotide sequence ID" value="NM_001368719.1"/>
</dbReference>
<dbReference type="RefSeq" id="NP_037504.1">
    <molecule id="O60565-1"/>
    <property type="nucleotide sequence ID" value="NM_013372.7"/>
</dbReference>
<dbReference type="PDB" id="5AEJ">
    <property type="method" value="X-ray"/>
    <property type="resolution" value="1.90 A"/>
    <property type="chains" value="A/B/C/D=72-184"/>
</dbReference>
<dbReference type="PDB" id="8B7H">
    <property type="method" value="X-ray"/>
    <property type="resolution" value="1.95 A"/>
    <property type="chains" value="A=67-184"/>
</dbReference>
<dbReference type="PDBsum" id="5AEJ"/>
<dbReference type="PDBsum" id="8B7H"/>
<dbReference type="SMR" id="O60565"/>
<dbReference type="BioGRID" id="117754">
    <property type="interactions" value="5"/>
</dbReference>
<dbReference type="FunCoup" id="O60565">
    <property type="interactions" value="201"/>
</dbReference>
<dbReference type="IntAct" id="O60565">
    <property type="interactions" value="8"/>
</dbReference>
<dbReference type="MINT" id="O60565"/>
<dbReference type="STRING" id="9606.ENSP00000498748"/>
<dbReference type="GlyCosmos" id="O60565">
    <property type="glycosylation" value="2 sites, 1 glycan"/>
</dbReference>
<dbReference type="GlyGen" id="O60565">
    <property type="glycosylation" value="3 sites, 2 N-linked glycans (1 site), 2 O-linked glycans (2 sites)"/>
</dbReference>
<dbReference type="iPTMnet" id="O60565"/>
<dbReference type="PhosphoSitePlus" id="O60565"/>
<dbReference type="BioMuta" id="GREM1"/>
<dbReference type="jPOST" id="O60565"/>
<dbReference type="MassIVE" id="O60565"/>
<dbReference type="PaxDb" id="9606-ENSP00000478319"/>
<dbReference type="PeptideAtlas" id="O60565"/>
<dbReference type="ProteomicsDB" id="49469">
    <molecule id="O60565-1"/>
</dbReference>
<dbReference type="ProteomicsDB" id="49470">
    <molecule id="O60565-2"/>
</dbReference>
<dbReference type="Pumba" id="O60565"/>
<dbReference type="Antibodypedia" id="2030">
    <property type="antibodies" value="565 antibodies from 36 providers"/>
</dbReference>
<dbReference type="DNASU" id="26585"/>
<dbReference type="Ensembl" id="ENST00000300177.8">
    <molecule id="O60565-1"/>
    <property type="protein sequence ID" value="ENSP00000300177.4"/>
    <property type="gene ID" value="ENSG00000276886.4"/>
</dbReference>
<dbReference type="Ensembl" id="ENST00000322805.5">
    <molecule id="O60565-2"/>
    <property type="protein sequence ID" value="ENSP00000323101.4"/>
    <property type="gene ID" value="ENSG00000276886.4"/>
</dbReference>
<dbReference type="Ensembl" id="ENST00000560830.1">
    <molecule id="O60565-2"/>
    <property type="protein sequence ID" value="ENSP00000453141.1"/>
    <property type="gene ID" value="ENSG00000166923.12"/>
</dbReference>
<dbReference type="Ensembl" id="ENST00000632478.1">
    <molecule id="O60565-2"/>
    <property type="protein sequence ID" value="ENSP00000488158.1"/>
    <property type="gene ID" value="ENSG00000282046.3"/>
</dbReference>
<dbReference type="Ensembl" id="ENST00000651081.1">
    <molecule id="O60565-1"/>
    <property type="protein sequence ID" value="ENSP00000498897.1"/>
    <property type="gene ID" value="ENSG00000282046.3"/>
</dbReference>
<dbReference type="Ensembl" id="ENST00000651154.1">
    <molecule id="O60565-1"/>
    <property type="protein sequence ID" value="ENSP00000498748.1"/>
    <property type="gene ID" value="ENSG00000166923.12"/>
</dbReference>
<dbReference type="Ensembl" id="ENST00000651986.1">
    <molecule id="O60565-1"/>
    <property type="protein sequence ID" value="ENSP00000498605.1"/>
    <property type="gene ID" value="ENSG00000282046.3"/>
</dbReference>
<dbReference type="Ensembl" id="ENST00000652365.1">
    <molecule id="O60565-1"/>
    <property type="protein sequence ID" value="ENSP00000498763.1"/>
    <property type="gene ID" value="ENSG00000166923.12"/>
</dbReference>
<dbReference type="GeneID" id="26585"/>
<dbReference type="KEGG" id="hsa:26585"/>
<dbReference type="MANE-Select" id="ENST00000651154.1">
    <property type="protein sequence ID" value="ENSP00000498748.1"/>
    <property type="RefSeq nucleotide sequence ID" value="NM_013372.7"/>
    <property type="RefSeq protein sequence ID" value="NP_037504.1"/>
</dbReference>
<dbReference type="UCSC" id="uc001zhe.3">
    <molecule id="O60565-1"/>
    <property type="organism name" value="human"/>
</dbReference>
<dbReference type="AGR" id="HGNC:2001"/>
<dbReference type="CTD" id="26585"/>
<dbReference type="DisGeNET" id="26585"/>
<dbReference type="GeneCards" id="GREM1"/>
<dbReference type="HGNC" id="HGNC:2001">
    <property type="gene designation" value="GREM1"/>
</dbReference>
<dbReference type="HPA" id="ENSG00000166923">
    <property type="expression patterns" value="Tissue enhanced (gallbladder, smooth muscle)"/>
</dbReference>
<dbReference type="MalaCards" id="GREM1"/>
<dbReference type="MIM" id="601228">
    <property type="type" value="phenotype"/>
</dbReference>
<dbReference type="MIM" id="603054">
    <property type="type" value="gene"/>
</dbReference>
<dbReference type="neXtProt" id="NX_O60565"/>
<dbReference type="OpenTargets" id="ENSG00000166923"/>
<dbReference type="Orphanet" id="157794">
    <property type="disease" value="Hereditary mixed polyposis syndrome"/>
</dbReference>
<dbReference type="PharmGKB" id="PA26537"/>
<dbReference type="VEuPathDB" id="HostDB:ENSG00000166923"/>
<dbReference type="eggNOG" id="ENOG502QQ5X">
    <property type="taxonomic scope" value="Eukaryota"/>
</dbReference>
<dbReference type="GeneTree" id="ENSGT00940000154209"/>
<dbReference type="HOGENOM" id="CLU_101024_0_0_1"/>
<dbReference type="InParanoid" id="O60565"/>
<dbReference type="OMA" id="PPDKDQY"/>
<dbReference type="OrthoDB" id="10061784at2759"/>
<dbReference type="PAN-GO" id="O60565">
    <property type="GO annotations" value="5 GO annotations based on evolutionary models"/>
</dbReference>
<dbReference type="PhylomeDB" id="O60565"/>
<dbReference type="TreeFam" id="TF106445"/>
<dbReference type="PathwayCommons" id="O60565"/>
<dbReference type="Reactome" id="R-HSA-9830674">
    <property type="pathway name" value="Formation of the ureteric bud"/>
</dbReference>
<dbReference type="SignaLink" id="O60565"/>
<dbReference type="BioGRID-ORCS" id="26585">
    <property type="hits" value="13 hits in 1154 CRISPR screens"/>
</dbReference>
<dbReference type="ChiTaRS" id="GREM1">
    <property type="organism name" value="human"/>
</dbReference>
<dbReference type="GenomeRNAi" id="26585"/>
<dbReference type="Pharos" id="O60565">
    <property type="development level" value="Tbio"/>
</dbReference>
<dbReference type="PRO" id="PR:O60565"/>
<dbReference type="Proteomes" id="UP000005640">
    <property type="component" value="Chromosome 15"/>
</dbReference>
<dbReference type="RNAct" id="O60565">
    <property type="molecule type" value="protein"/>
</dbReference>
<dbReference type="Bgee" id="ENSG00000166923">
    <property type="expression patterns" value="Expressed in stromal cell of endometrium and 96 other cell types or tissues"/>
</dbReference>
<dbReference type="ExpressionAtlas" id="O60565">
    <property type="expression patterns" value="baseline and differential"/>
</dbReference>
<dbReference type="GO" id="GO:0009986">
    <property type="term" value="C:cell surface"/>
    <property type="evidence" value="ECO:0007669"/>
    <property type="project" value="Ensembl"/>
</dbReference>
<dbReference type="GO" id="GO:0062023">
    <property type="term" value="C:collagen-containing extracellular matrix"/>
    <property type="evidence" value="ECO:0007005"/>
    <property type="project" value="BHF-UCL"/>
</dbReference>
<dbReference type="GO" id="GO:0005615">
    <property type="term" value="C:extracellular space"/>
    <property type="evidence" value="ECO:0000318"/>
    <property type="project" value="GO_Central"/>
</dbReference>
<dbReference type="GO" id="GO:0036122">
    <property type="term" value="F:BMP binding"/>
    <property type="evidence" value="ECO:0000314"/>
    <property type="project" value="UniProtKB"/>
</dbReference>
<dbReference type="GO" id="GO:0005125">
    <property type="term" value="F:cytokine activity"/>
    <property type="evidence" value="ECO:0007669"/>
    <property type="project" value="UniProtKB-KW"/>
</dbReference>
<dbReference type="GO" id="GO:0016015">
    <property type="term" value="F:morphogen activity"/>
    <property type="evidence" value="ECO:0000250"/>
    <property type="project" value="BHF-UCL"/>
</dbReference>
<dbReference type="GO" id="GO:0042803">
    <property type="term" value="F:protein homodimerization activity"/>
    <property type="evidence" value="ECO:0000353"/>
    <property type="project" value="UniProtKB"/>
</dbReference>
<dbReference type="GO" id="GO:0048018">
    <property type="term" value="F:receptor ligand activity"/>
    <property type="evidence" value="ECO:0000250"/>
    <property type="project" value="BHF-UCL"/>
</dbReference>
<dbReference type="GO" id="GO:0030297">
    <property type="term" value="F:transmembrane receptor protein tyrosine kinase activator activity"/>
    <property type="evidence" value="ECO:0000250"/>
    <property type="project" value="BHF-UCL"/>
</dbReference>
<dbReference type="GO" id="GO:0043184">
    <property type="term" value="F:vascular endothelial growth factor receptor 2 binding"/>
    <property type="evidence" value="ECO:0000250"/>
    <property type="project" value="BHF-UCL"/>
</dbReference>
<dbReference type="GO" id="GO:0055007">
    <property type="term" value="P:cardiac muscle cell differentiation"/>
    <property type="evidence" value="ECO:0000250"/>
    <property type="project" value="BHF-UCL"/>
</dbReference>
<dbReference type="GO" id="GO:0060379">
    <property type="term" value="P:cardiac muscle cell myoblast differentiation"/>
    <property type="evidence" value="ECO:0007669"/>
    <property type="project" value="Ensembl"/>
</dbReference>
<dbReference type="GO" id="GO:0002042">
    <property type="term" value="P:cell migration involved in sprouting angiogenesis"/>
    <property type="evidence" value="ECO:0007669"/>
    <property type="project" value="Ensembl"/>
</dbReference>
<dbReference type="GO" id="GO:0000902">
    <property type="term" value="P:cell morphogenesis"/>
    <property type="evidence" value="ECO:0000314"/>
    <property type="project" value="BHF-UCL"/>
</dbReference>
<dbReference type="GO" id="GO:0007267">
    <property type="term" value="P:cell-cell signaling"/>
    <property type="evidence" value="ECO:0007669"/>
    <property type="project" value="Ensembl"/>
</dbReference>
<dbReference type="GO" id="GO:0030199">
    <property type="term" value="P:collagen fibril organization"/>
    <property type="evidence" value="ECO:0000315"/>
    <property type="project" value="BHF-UCL"/>
</dbReference>
<dbReference type="GO" id="GO:0048263">
    <property type="term" value="P:determination of dorsal identity"/>
    <property type="evidence" value="ECO:0000315"/>
    <property type="project" value="BHF-UCL"/>
</dbReference>
<dbReference type="GO" id="GO:0030326">
    <property type="term" value="P:embryonic limb morphogenesis"/>
    <property type="evidence" value="ECO:0007669"/>
    <property type="project" value="Ensembl"/>
</dbReference>
<dbReference type="GO" id="GO:0060173">
    <property type="term" value="P:limb development"/>
    <property type="evidence" value="ECO:0000315"/>
    <property type="project" value="AgBase"/>
</dbReference>
<dbReference type="GO" id="GO:0003337">
    <property type="term" value="P:mesenchymal to epithelial transition involved in metanephros morphogenesis"/>
    <property type="evidence" value="ECO:0007669"/>
    <property type="project" value="Ensembl"/>
</dbReference>
<dbReference type="GO" id="GO:0043066">
    <property type="term" value="P:negative regulation of apoptotic process"/>
    <property type="evidence" value="ECO:0000315"/>
    <property type="project" value="AgBase"/>
</dbReference>
<dbReference type="GO" id="GO:0030514">
    <property type="term" value="P:negative regulation of BMP signaling pathway"/>
    <property type="evidence" value="ECO:0000314"/>
    <property type="project" value="BHF-UCL"/>
</dbReference>
<dbReference type="GO" id="GO:0030502">
    <property type="term" value="P:negative regulation of bone mineralization"/>
    <property type="evidence" value="ECO:0000315"/>
    <property type="project" value="BHF-UCL"/>
</dbReference>
<dbReference type="GO" id="GO:1900158">
    <property type="term" value="P:negative regulation of bone mineralization involved in bone maturation"/>
    <property type="evidence" value="ECO:0000315"/>
    <property type="project" value="BHF-UCL"/>
</dbReference>
<dbReference type="GO" id="GO:0046851">
    <property type="term" value="P:negative regulation of bone remodeling"/>
    <property type="evidence" value="ECO:0000315"/>
    <property type="project" value="BHF-UCL"/>
</dbReference>
<dbReference type="GO" id="GO:1900155">
    <property type="term" value="P:negative regulation of bone trabecula formation"/>
    <property type="evidence" value="ECO:0000315"/>
    <property type="project" value="BHF-UCL"/>
</dbReference>
<dbReference type="GO" id="GO:0090090">
    <property type="term" value="P:negative regulation of canonical Wnt signaling pathway"/>
    <property type="evidence" value="ECO:0000314"/>
    <property type="project" value="BHF-UCL"/>
</dbReference>
<dbReference type="GO" id="GO:0032331">
    <property type="term" value="P:negative regulation of chondrocyte differentiation"/>
    <property type="evidence" value="ECO:0000315"/>
    <property type="project" value="AgBase"/>
</dbReference>
<dbReference type="GO" id="GO:0045892">
    <property type="term" value="P:negative regulation of DNA-templated transcription"/>
    <property type="evidence" value="ECO:0007669"/>
    <property type="project" value="Ensembl"/>
</dbReference>
<dbReference type="GO" id="GO:0090027">
    <property type="term" value="P:negative regulation of monocyte chemotaxis"/>
    <property type="evidence" value="ECO:0000250"/>
    <property type="project" value="BHF-UCL"/>
</dbReference>
<dbReference type="GO" id="GO:0045668">
    <property type="term" value="P:negative regulation of osteoblast differentiation"/>
    <property type="evidence" value="ECO:0000315"/>
    <property type="project" value="UniProtKB"/>
</dbReference>
<dbReference type="GO" id="GO:0033689">
    <property type="term" value="P:negative regulation of osteoblast proliferation"/>
    <property type="evidence" value="ECO:0000315"/>
    <property type="project" value="BHF-UCL"/>
</dbReference>
<dbReference type="GO" id="GO:0090291">
    <property type="term" value="P:negative regulation of osteoclast proliferation"/>
    <property type="evidence" value="ECO:0000315"/>
    <property type="project" value="BHF-UCL"/>
</dbReference>
<dbReference type="GO" id="GO:0060392">
    <property type="term" value="P:negative regulation of SMAD protein signal transduction"/>
    <property type="evidence" value="ECO:0000314"/>
    <property type="project" value="BHF-UCL"/>
</dbReference>
<dbReference type="GO" id="GO:0045766">
    <property type="term" value="P:positive regulation of angiogenesis"/>
    <property type="evidence" value="ECO:0007669"/>
    <property type="project" value="Ensembl"/>
</dbReference>
<dbReference type="GO" id="GO:0090190">
    <property type="term" value="P:positive regulation of branching involved in ureteric bud morphogenesis"/>
    <property type="evidence" value="ECO:0007669"/>
    <property type="project" value="Ensembl"/>
</dbReference>
<dbReference type="GO" id="GO:0090050">
    <property type="term" value="P:positive regulation of cell migration involved in sprouting angiogenesis"/>
    <property type="evidence" value="ECO:0000250"/>
    <property type="project" value="BHF-UCL"/>
</dbReference>
<dbReference type="GO" id="GO:0008284">
    <property type="term" value="P:positive regulation of cell population proliferation"/>
    <property type="evidence" value="ECO:0000314"/>
    <property type="project" value="BHF-UCL"/>
</dbReference>
<dbReference type="GO" id="GO:1901224">
    <property type="term" value="P:positive regulation of non-canonical NF-kappaB signal transduction"/>
    <property type="evidence" value="ECO:0007669"/>
    <property type="project" value="Ensembl"/>
</dbReference>
<dbReference type="GO" id="GO:0002092">
    <property type="term" value="P:positive regulation of receptor internalization"/>
    <property type="evidence" value="ECO:0000250"/>
    <property type="project" value="BHF-UCL"/>
</dbReference>
<dbReference type="GO" id="GO:0045944">
    <property type="term" value="P:positive regulation of transcription by RNA polymerase II"/>
    <property type="evidence" value="ECO:0000250"/>
    <property type="project" value="BHF-UCL"/>
</dbReference>
<dbReference type="GO" id="GO:1900748">
    <property type="term" value="P:positive regulation of vascular endothelial growth factor signaling pathway"/>
    <property type="evidence" value="ECO:0000250"/>
    <property type="project" value="BHF-UCL"/>
</dbReference>
<dbReference type="GO" id="GO:0009954">
    <property type="term" value="P:proximal/distal pattern formation"/>
    <property type="evidence" value="ECO:0007669"/>
    <property type="project" value="Ensembl"/>
</dbReference>
<dbReference type="GO" id="GO:0010717">
    <property type="term" value="P:regulation of epithelial to mesenchymal transition"/>
    <property type="evidence" value="ECO:0000315"/>
    <property type="project" value="UniProtKB"/>
</dbReference>
<dbReference type="GO" id="GO:0051893">
    <property type="term" value="P:regulation of focal adhesion assembly"/>
    <property type="evidence" value="ECO:0007669"/>
    <property type="project" value="Ensembl"/>
</dbReference>
<dbReference type="GO" id="GO:0038098">
    <property type="term" value="P:sequestering of BMP from receptor via BMP binding"/>
    <property type="evidence" value="ECO:0000318"/>
    <property type="project" value="GO_Central"/>
</dbReference>
<dbReference type="GO" id="GO:0007165">
    <property type="term" value="P:signal transduction"/>
    <property type="evidence" value="ECO:0000250"/>
    <property type="project" value="BHF-UCL"/>
</dbReference>
<dbReference type="GO" id="GO:0060676">
    <property type="term" value="P:ureteric bud formation"/>
    <property type="evidence" value="ECO:0007669"/>
    <property type="project" value="Ensembl"/>
</dbReference>
<dbReference type="FunFam" id="2.10.90.10:FF:000013">
    <property type="entry name" value="Gremlin"/>
    <property type="match status" value="1"/>
</dbReference>
<dbReference type="Gene3D" id="2.10.90.10">
    <property type="entry name" value="Cystine-knot cytokines"/>
    <property type="match status" value="1"/>
</dbReference>
<dbReference type="InterPro" id="IPR006207">
    <property type="entry name" value="Cys_knot_C"/>
</dbReference>
<dbReference type="InterPro" id="IPR029034">
    <property type="entry name" value="Cystine-knot_cytokine"/>
</dbReference>
<dbReference type="InterPro" id="IPR004133">
    <property type="entry name" value="DAN"/>
</dbReference>
<dbReference type="InterPro" id="IPR017159">
    <property type="entry name" value="Gremlin-1/2"/>
</dbReference>
<dbReference type="PANTHER" id="PTHR15283">
    <property type="entry name" value="GREMLIN 1"/>
    <property type="match status" value="1"/>
</dbReference>
<dbReference type="PANTHER" id="PTHR15283:SF3">
    <property type="entry name" value="GREMLIN-1"/>
    <property type="match status" value="1"/>
</dbReference>
<dbReference type="Pfam" id="PF03045">
    <property type="entry name" value="DAN"/>
    <property type="match status" value="1"/>
</dbReference>
<dbReference type="PIRSF" id="PIRSF037254">
    <property type="entry name" value="Gremlin_precursor"/>
    <property type="match status" value="1"/>
</dbReference>
<dbReference type="SMART" id="SM00041">
    <property type="entry name" value="CT"/>
    <property type="match status" value="1"/>
</dbReference>
<organism>
    <name type="scientific">Homo sapiens</name>
    <name type="common">Human</name>
    <dbReference type="NCBI Taxonomy" id="9606"/>
    <lineage>
        <taxon>Eukaryota</taxon>
        <taxon>Metazoa</taxon>
        <taxon>Chordata</taxon>
        <taxon>Craniata</taxon>
        <taxon>Vertebrata</taxon>
        <taxon>Euteleostomi</taxon>
        <taxon>Mammalia</taxon>
        <taxon>Eutheria</taxon>
        <taxon>Euarchontoglires</taxon>
        <taxon>Primates</taxon>
        <taxon>Haplorrhini</taxon>
        <taxon>Catarrhini</taxon>
        <taxon>Hominidae</taxon>
        <taxon>Homo</taxon>
    </lineage>
</organism>
<proteinExistence type="evidence at protein level"/>
<sequence length="184" mass="20697">MSRTAYTVGALLLLLGTLLPAAEGKKKGSQGAIPPPDKAQHNDSEQTQSPQQPGSRNRGRGQGRGTAMPGEEVLESSQEALHVTERKYLKRDWCKTQPLKQTIHEEGCNSRTIINRFCYGQCNSFYIPRHIRKEEGSFQSCSFCKPKKFTTMMVTLNCPELQPPTKKKRVTRVKQCRCISIDLD</sequence>